<name>AROE_METCA</name>
<protein>
    <recommendedName>
        <fullName evidence="1">Shikimate dehydrogenase (NADP(+))</fullName>
        <shortName evidence="1">SDH</shortName>
        <ecNumber evidence="1">1.1.1.25</ecNumber>
    </recommendedName>
</protein>
<accession>Q603L1</accession>
<proteinExistence type="inferred from homology"/>
<comment type="function">
    <text evidence="1">Involved in the biosynthesis of the chorismate, which leads to the biosynthesis of aromatic amino acids. Catalyzes the reversible NADPH linked reduction of 3-dehydroshikimate (DHSA) to yield shikimate (SA).</text>
</comment>
<comment type="catalytic activity">
    <reaction evidence="1">
        <text>shikimate + NADP(+) = 3-dehydroshikimate + NADPH + H(+)</text>
        <dbReference type="Rhea" id="RHEA:17737"/>
        <dbReference type="ChEBI" id="CHEBI:15378"/>
        <dbReference type="ChEBI" id="CHEBI:16630"/>
        <dbReference type="ChEBI" id="CHEBI:36208"/>
        <dbReference type="ChEBI" id="CHEBI:57783"/>
        <dbReference type="ChEBI" id="CHEBI:58349"/>
        <dbReference type="EC" id="1.1.1.25"/>
    </reaction>
</comment>
<comment type="pathway">
    <text evidence="1">Metabolic intermediate biosynthesis; chorismate biosynthesis; chorismate from D-erythrose 4-phosphate and phosphoenolpyruvate: step 4/7.</text>
</comment>
<comment type="subunit">
    <text evidence="1">Homodimer.</text>
</comment>
<comment type="similarity">
    <text evidence="1">Belongs to the shikimate dehydrogenase family.</text>
</comment>
<feature type="chain" id="PRO_0000325135" description="Shikimate dehydrogenase (NADP(+))">
    <location>
        <begin position="1"/>
        <end position="279"/>
    </location>
</feature>
<feature type="active site" description="Proton acceptor" evidence="1">
    <location>
        <position position="68"/>
    </location>
</feature>
<feature type="binding site" evidence="1">
    <location>
        <begin position="17"/>
        <end position="19"/>
    </location>
    <ligand>
        <name>shikimate</name>
        <dbReference type="ChEBI" id="CHEBI:36208"/>
    </ligand>
</feature>
<feature type="binding site" evidence="1">
    <location>
        <position position="64"/>
    </location>
    <ligand>
        <name>shikimate</name>
        <dbReference type="ChEBI" id="CHEBI:36208"/>
    </ligand>
</feature>
<feature type="binding site" evidence="1">
    <location>
        <position position="89"/>
    </location>
    <ligand>
        <name>shikimate</name>
        <dbReference type="ChEBI" id="CHEBI:36208"/>
    </ligand>
</feature>
<feature type="binding site" evidence="1">
    <location>
        <position position="105"/>
    </location>
    <ligand>
        <name>shikimate</name>
        <dbReference type="ChEBI" id="CHEBI:36208"/>
    </ligand>
</feature>
<feature type="binding site" evidence="1">
    <location>
        <begin position="130"/>
        <end position="134"/>
    </location>
    <ligand>
        <name>NADP(+)</name>
        <dbReference type="ChEBI" id="CHEBI:58349"/>
    </ligand>
</feature>
<feature type="binding site" evidence="1">
    <location>
        <position position="218"/>
    </location>
    <ligand>
        <name>NADP(+)</name>
        <dbReference type="ChEBI" id="CHEBI:58349"/>
    </ligand>
</feature>
<feature type="binding site" evidence="1">
    <location>
        <position position="220"/>
    </location>
    <ligand>
        <name>shikimate</name>
        <dbReference type="ChEBI" id="CHEBI:36208"/>
    </ligand>
</feature>
<feature type="binding site" evidence="1">
    <location>
        <position position="242"/>
    </location>
    <ligand>
        <name>NADP(+)</name>
        <dbReference type="ChEBI" id="CHEBI:58349"/>
    </ligand>
</feature>
<keyword id="KW-0028">Amino-acid biosynthesis</keyword>
<keyword id="KW-0057">Aromatic amino acid biosynthesis</keyword>
<keyword id="KW-0521">NADP</keyword>
<keyword id="KW-0560">Oxidoreductase</keyword>
<keyword id="KW-1185">Reference proteome</keyword>
<evidence type="ECO:0000255" key="1">
    <source>
        <dbReference type="HAMAP-Rule" id="MF_00222"/>
    </source>
</evidence>
<dbReference type="EC" id="1.1.1.25" evidence="1"/>
<dbReference type="EMBL" id="AE017282">
    <property type="protein sequence ID" value="AAU91094.1"/>
    <property type="molecule type" value="Genomic_DNA"/>
</dbReference>
<dbReference type="RefSeq" id="WP_010961995.1">
    <property type="nucleotide sequence ID" value="NC_002977.6"/>
</dbReference>
<dbReference type="SMR" id="Q603L1"/>
<dbReference type="STRING" id="243233.MCA2794"/>
<dbReference type="GeneID" id="88224970"/>
<dbReference type="KEGG" id="mca:MCA2794"/>
<dbReference type="eggNOG" id="COG0169">
    <property type="taxonomic scope" value="Bacteria"/>
</dbReference>
<dbReference type="HOGENOM" id="CLU_044063_2_1_6"/>
<dbReference type="UniPathway" id="UPA00053">
    <property type="reaction ID" value="UER00087"/>
</dbReference>
<dbReference type="Proteomes" id="UP000006821">
    <property type="component" value="Chromosome"/>
</dbReference>
<dbReference type="GO" id="GO:0005829">
    <property type="term" value="C:cytosol"/>
    <property type="evidence" value="ECO:0007669"/>
    <property type="project" value="TreeGrafter"/>
</dbReference>
<dbReference type="GO" id="GO:0050661">
    <property type="term" value="F:NADP binding"/>
    <property type="evidence" value="ECO:0007669"/>
    <property type="project" value="InterPro"/>
</dbReference>
<dbReference type="GO" id="GO:0004764">
    <property type="term" value="F:shikimate 3-dehydrogenase (NADP+) activity"/>
    <property type="evidence" value="ECO:0007669"/>
    <property type="project" value="UniProtKB-UniRule"/>
</dbReference>
<dbReference type="GO" id="GO:0008652">
    <property type="term" value="P:amino acid biosynthetic process"/>
    <property type="evidence" value="ECO:0007669"/>
    <property type="project" value="UniProtKB-KW"/>
</dbReference>
<dbReference type="GO" id="GO:0009073">
    <property type="term" value="P:aromatic amino acid family biosynthetic process"/>
    <property type="evidence" value="ECO:0007669"/>
    <property type="project" value="UniProtKB-KW"/>
</dbReference>
<dbReference type="GO" id="GO:0009423">
    <property type="term" value="P:chorismate biosynthetic process"/>
    <property type="evidence" value="ECO:0007669"/>
    <property type="project" value="UniProtKB-UniRule"/>
</dbReference>
<dbReference type="GO" id="GO:0019632">
    <property type="term" value="P:shikimate metabolic process"/>
    <property type="evidence" value="ECO:0007669"/>
    <property type="project" value="InterPro"/>
</dbReference>
<dbReference type="CDD" id="cd01065">
    <property type="entry name" value="NAD_bind_Shikimate_DH"/>
    <property type="match status" value="1"/>
</dbReference>
<dbReference type="FunFam" id="3.40.50.10860:FF:000006">
    <property type="entry name" value="Shikimate dehydrogenase (NADP(+))"/>
    <property type="match status" value="1"/>
</dbReference>
<dbReference type="Gene3D" id="3.40.50.10860">
    <property type="entry name" value="Leucine Dehydrogenase, chain A, domain 1"/>
    <property type="match status" value="1"/>
</dbReference>
<dbReference type="Gene3D" id="3.40.50.720">
    <property type="entry name" value="NAD(P)-binding Rossmann-like Domain"/>
    <property type="match status" value="1"/>
</dbReference>
<dbReference type="HAMAP" id="MF_00222">
    <property type="entry name" value="Shikimate_DH_AroE"/>
    <property type="match status" value="1"/>
</dbReference>
<dbReference type="InterPro" id="IPR046346">
    <property type="entry name" value="Aminoacid_DH-like_N_sf"/>
</dbReference>
<dbReference type="InterPro" id="IPR036291">
    <property type="entry name" value="NAD(P)-bd_dom_sf"/>
</dbReference>
<dbReference type="InterPro" id="IPR041121">
    <property type="entry name" value="SDH_C"/>
</dbReference>
<dbReference type="InterPro" id="IPR011342">
    <property type="entry name" value="Shikimate_DH"/>
</dbReference>
<dbReference type="InterPro" id="IPR013708">
    <property type="entry name" value="Shikimate_DH-bd_N"/>
</dbReference>
<dbReference type="InterPro" id="IPR022893">
    <property type="entry name" value="Shikimate_DH_fam"/>
</dbReference>
<dbReference type="InterPro" id="IPR006151">
    <property type="entry name" value="Shikm_DH/Glu-tRNA_Rdtase"/>
</dbReference>
<dbReference type="NCBIfam" id="TIGR00507">
    <property type="entry name" value="aroE"/>
    <property type="match status" value="1"/>
</dbReference>
<dbReference type="NCBIfam" id="NF001310">
    <property type="entry name" value="PRK00258.1-2"/>
    <property type="match status" value="1"/>
</dbReference>
<dbReference type="PANTHER" id="PTHR21089:SF1">
    <property type="entry name" value="BIFUNCTIONAL 3-DEHYDROQUINATE DEHYDRATASE_SHIKIMATE DEHYDROGENASE, CHLOROPLASTIC"/>
    <property type="match status" value="1"/>
</dbReference>
<dbReference type="PANTHER" id="PTHR21089">
    <property type="entry name" value="SHIKIMATE DEHYDROGENASE"/>
    <property type="match status" value="1"/>
</dbReference>
<dbReference type="Pfam" id="PF18317">
    <property type="entry name" value="SDH_C"/>
    <property type="match status" value="1"/>
</dbReference>
<dbReference type="Pfam" id="PF01488">
    <property type="entry name" value="Shikimate_DH"/>
    <property type="match status" value="1"/>
</dbReference>
<dbReference type="Pfam" id="PF08501">
    <property type="entry name" value="Shikimate_dh_N"/>
    <property type="match status" value="1"/>
</dbReference>
<dbReference type="SUPFAM" id="SSF53223">
    <property type="entry name" value="Aminoacid dehydrogenase-like, N-terminal domain"/>
    <property type="match status" value="1"/>
</dbReference>
<dbReference type="SUPFAM" id="SSF51735">
    <property type="entry name" value="NAD(P)-binding Rossmann-fold domains"/>
    <property type="match status" value="1"/>
</dbReference>
<gene>
    <name evidence="1" type="primary">aroE</name>
    <name type="ordered locus">MCA2794</name>
</gene>
<organism>
    <name type="scientific">Methylococcus capsulatus (strain ATCC 33009 / NCIMB 11132 / Bath)</name>
    <dbReference type="NCBI Taxonomy" id="243233"/>
    <lineage>
        <taxon>Bacteria</taxon>
        <taxon>Pseudomonadati</taxon>
        <taxon>Pseudomonadota</taxon>
        <taxon>Gammaproteobacteria</taxon>
        <taxon>Methylococcales</taxon>
        <taxon>Methylococcaceae</taxon>
        <taxon>Methylococcus</taxon>
    </lineage>
</organism>
<sequence>MTQPDRYAVFGHPIEHSQSPRIHALFAAQTGQDLIYTAEDVPPDRFESCVRAFFDGGGRGLNCTIPLKEMAWLLADSRSGRAKRARAVNTLLLRADGSIFGDNTDGIGLLRDLRDNLGLNLAGTKILILGAGGATRGILAPLLAERPDRLVIANRTVATAETLTVEFGDLGPVEGCGFAALAGRRFDLIINATAASLSGELPPLPADILAPGGSCYDLAYAAEPTPFVRWGQEKQAVVSADGIGMLVEQAAEAFLLWRGVRPQTRPVIETLEAERRTAK</sequence>
<reference key="1">
    <citation type="journal article" date="2004" name="PLoS Biol.">
        <title>Genomic insights into methanotrophy: the complete genome sequence of Methylococcus capsulatus (Bath).</title>
        <authorList>
            <person name="Ward N.L."/>
            <person name="Larsen O."/>
            <person name="Sakwa J."/>
            <person name="Bruseth L."/>
            <person name="Khouri H.M."/>
            <person name="Durkin A.S."/>
            <person name="Dimitrov G."/>
            <person name="Jiang L."/>
            <person name="Scanlan D."/>
            <person name="Kang K.H."/>
            <person name="Lewis M.R."/>
            <person name="Nelson K.E."/>
            <person name="Methe B.A."/>
            <person name="Wu M."/>
            <person name="Heidelberg J.F."/>
            <person name="Paulsen I.T."/>
            <person name="Fouts D.E."/>
            <person name="Ravel J."/>
            <person name="Tettelin H."/>
            <person name="Ren Q."/>
            <person name="Read T.D."/>
            <person name="DeBoy R.T."/>
            <person name="Seshadri R."/>
            <person name="Salzberg S.L."/>
            <person name="Jensen H.B."/>
            <person name="Birkeland N.K."/>
            <person name="Nelson W.C."/>
            <person name="Dodson R.J."/>
            <person name="Grindhaug S.H."/>
            <person name="Holt I.E."/>
            <person name="Eidhammer I."/>
            <person name="Jonasen I."/>
            <person name="Vanaken S."/>
            <person name="Utterback T.R."/>
            <person name="Feldblyum T.V."/>
            <person name="Fraser C.M."/>
            <person name="Lillehaug J.R."/>
            <person name="Eisen J.A."/>
        </authorList>
    </citation>
    <scope>NUCLEOTIDE SEQUENCE [LARGE SCALE GENOMIC DNA]</scope>
    <source>
        <strain>ATCC 33009 / NCIMB 11132 / Bath</strain>
    </source>
</reference>